<dbReference type="EMBL" id="U35730">
    <property type="protein sequence ID" value="AAC39941.2"/>
    <property type="molecule type" value="mRNA"/>
</dbReference>
<dbReference type="CCDS" id="CCDS27524.1"/>
<dbReference type="RefSeq" id="NP_032441.4">
    <property type="nucleotide sequence ID" value="NM_008415.6"/>
</dbReference>
<dbReference type="SMR" id="Q60976"/>
<dbReference type="FunCoup" id="Q60976">
    <property type="interactions" value="1310"/>
</dbReference>
<dbReference type="STRING" id="10090.ENSMUSP00000051842"/>
<dbReference type="GlyGen" id="Q60976">
    <property type="glycosylation" value="1 site"/>
</dbReference>
<dbReference type="iPTMnet" id="Q60976"/>
<dbReference type="PhosphoSitePlus" id="Q60976"/>
<dbReference type="PaxDb" id="10090-ENSMUSP00000051842"/>
<dbReference type="ProteomicsDB" id="269362"/>
<dbReference type="Antibodypedia" id="27777">
    <property type="antibodies" value="25 antibodies from 10 providers"/>
</dbReference>
<dbReference type="DNASU" id="16469"/>
<dbReference type="Ensembl" id="ENSMUST00000050234.4">
    <property type="protein sequence ID" value="ENSMUSP00000051842.3"/>
    <property type="gene ID" value="ENSMUSG00000046380.4"/>
</dbReference>
<dbReference type="GeneID" id="16469"/>
<dbReference type="KEGG" id="mmu:16469"/>
<dbReference type="UCSC" id="uc007wfp.2">
    <property type="organism name" value="mouse"/>
</dbReference>
<dbReference type="AGR" id="MGI:106214"/>
<dbReference type="CTD" id="8629"/>
<dbReference type="MGI" id="MGI:106214">
    <property type="gene designation" value="Jrk"/>
</dbReference>
<dbReference type="VEuPathDB" id="HostDB:ENSMUSG00000046380"/>
<dbReference type="eggNOG" id="KOG3105">
    <property type="taxonomic scope" value="Eukaryota"/>
</dbReference>
<dbReference type="GeneTree" id="ENSGT00940000162277"/>
<dbReference type="HOGENOM" id="CLU_018294_1_1_1"/>
<dbReference type="InParanoid" id="Q60976"/>
<dbReference type="OMA" id="RDFMRHF"/>
<dbReference type="OrthoDB" id="125347at2759"/>
<dbReference type="PhylomeDB" id="Q60976"/>
<dbReference type="TreeFam" id="TF101131"/>
<dbReference type="BioGRID-ORCS" id="16469">
    <property type="hits" value="8 hits in 77 CRISPR screens"/>
</dbReference>
<dbReference type="ChiTaRS" id="Jrk">
    <property type="organism name" value="mouse"/>
</dbReference>
<dbReference type="PRO" id="PR:Q60976"/>
<dbReference type="Proteomes" id="UP000000589">
    <property type="component" value="Chromosome 15"/>
</dbReference>
<dbReference type="RNAct" id="Q60976">
    <property type="molecule type" value="protein"/>
</dbReference>
<dbReference type="Bgee" id="ENSMUSG00000046380">
    <property type="expression patterns" value="Expressed in ureteric bud trunk and 176 other cell types or tissues"/>
</dbReference>
<dbReference type="ExpressionAtlas" id="Q60976">
    <property type="expression patterns" value="baseline and differential"/>
</dbReference>
<dbReference type="GO" id="GO:0005737">
    <property type="term" value="C:cytoplasm"/>
    <property type="evidence" value="ECO:0000314"/>
    <property type="project" value="MGI"/>
</dbReference>
<dbReference type="GO" id="GO:0005634">
    <property type="term" value="C:nucleus"/>
    <property type="evidence" value="ECO:0000314"/>
    <property type="project" value="MGI"/>
</dbReference>
<dbReference type="GO" id="GO:1990904">
    <property type="term" value="C:ribonucleoprotein complex"/>
    <property type="evidence" value="ECO:0000314"/>
    <property type="project" value="MGI"/>
</dbReference>
<dbReference type="GO" id="GO:0003677">
    <property type="term" value="F:DNA binding"/>
    <property type="evidence" value="ECO:0007669"/>
    <property type="project" value="UniProtKB-KW"/>
</dbReference>
<dbReference type="GO" id="GO:0003729">
    <property type="term" value="F:mRNA binding"/>
    <property type="evidence" value="ECO:0000314"/>
    <property type="project" value="MGI"/>
</dbReference>
<dbReference type="GO" id="GO:0090263">
    <property type="term" value="P:positive regulation of canonical Wnt signaling pathway"/>
    <property type="evidence" value="ECO:0007669"/>
    <property type="project" value="Ensembl"/>
</dbReference>
<dbReference type="FunFam" id="1.10.10.60:FF:000280">
    <property type="entry name" value="jerky protein homolog"/>
    <property type="match status" value="1"/>
</dbReference>
<dbReference type="Gene3D" id="1.10.10.60">
    <property type="entry name" value="Homeodomain-like"/>
    <property type="match status" value="2"/>
</dbReference>
<dbReference type="InterPro" id="IPR050863">
    <property type="entry name" value="CenT-Element_Derived"/>
</dbReference>
<dbReference type="InterPro" id="IPR004875">
    <property type="entry name" value="DDE_SF_endonuclease_dom"/>
</dbReference>
<dbReference type="InterPro" id="IPR009057">
    <property type="entry name" value="Homeodomain-like_sf"/>
</dbReference>
<dbReference type="InterPro" id="IPR006600">
    <property type="entry name" value="HTH_CenpB_DNA-bd_dom"/>
</dbReference>
<dbReference type="InterPro" id="IPR007889">
    <property type="entry name" value="HTH_Psq"/>
</dbReference>
<dbReference type="PANTHER" id="PTHR19303:SF11">
    <property type="entry name" value="JERKY PROTEIN HOMOLOG"/>
    <property type="match status" value="1"/>
</dbReference>
<dbReference type="PANTHER" id="PTHR19303">
    <property type="entry name" value="TRANSPOSON"/>
    <property type="match status" value="1"/>
</dbReference>
<dbReference type="Pfam" id="PF04218">
    <property type="entry name" value="CENP-B_N"/>
    <property type="match status" value="1"/>
</dbReference>
<dbReference type="Pfam" id="PF03184">
    <property type="entry name" value="DDE_1"/>
    <property type="match status" value="1"/>
</dbReference>
<dbReference type="Pfam" id="PF03221">
    <property type="entry name" value="HTH_Tnp_Tc5"/>
    <property type="match status" value="1"/>
</dbReference>
<dbReference type="SMART" id="SM00674">
    <property type="entry name" value="CENPB"/>
    <property type="match status" value="1"/>
</dbReference>
<dbReference type="SUPFAM" id="SSF46689">
    <property type="entry name" value="Homeodomain-like"/>
    <property type="match status" value="2"/>
</dbReference>
<dbReference type="PROSITE" id="PS51253">
    <property type="entry name" value="HTH_CENPB"/>
    <property type="match status" value="1"/>
</dbReference>
<dbReference type="PROSITE" id="PS50960">
    <property type="entry name" value="HTH_PSQ"/>
    <property type="match status" value="1"/>
</dbReference>
<protein>
    <recommendedName>
        <fullName evidence="4">Jerky protein</fullName>
    </recommendedName>
</protein>
<organism>
    <name type="scientific">Mus musculus</name>
    <name type="common">Mouse</name>
    <dbReference type="NCBI Taxonomy" id="10090"/>
    <lineage>
        <taxon>Eukaryota</taxon>
        <taxon>Metazoa</taxon>
        <taxon>Chordata</taxon>
        <taxon>Craniata</taxon>
        <taxon>Vertebrata</taxon>
        <taxon>Euteleostomi</taxon>
        <taxon>Mammalia</taxon>
        <taxon>Eutheria</taxon>
        <taxon>Euarchontoglires</taxon>
        <taxon>Glires</taxon>
        <taxon>Rodentia</taxon>
        <taxon>Myomorpha</taxon>
        <taxon>Muroidea</taxon>
        <taxon>Muridae</taxon>
        <taxon>Murinae</taxon>
        <taxon>Mus</taxon>
        <taxon>Mus</taxon>
    </lineage>
</organism>
<sequence>MASKQAAAKGKGEKRKRVVLTLKEKIDICTRLERGESRKALMQEYNVGMSTLYDIKAHKAQLLRFFASSDSRQALEQRRTLHTPKLEHLDRVLYEWFLVKRAEGIPVSGPMLIEKAKDFYKQMRLTEPCVFSGGWLWRFKARHGIKKLDASSEKQAADHQAAEQFCGFFRSLAAEHGLSPEQVYSADETGLVWRCLPNSAPDDGTVPHFKQGKDRLTVLMCANATGSHRIKPLAIGKGGGPRAFRGIQHLPIAYKAQGNAWVDKEIFSDWFHHIFVPSVREHFRTIGLPEDSKAILLLDHSRAHSQESELVSENVFTIFLPSSVTSLLQPTEQGIRRAFMRLFINPPVAFQGFPTRHNINDAIVNVARAWNAVPSQVFQRAWRKLWPTVTFTEGSSSEEEAECCAIKPHKTFAHILGLVKEGPTCSGSRLQDSRVEERVVAGRDIDEAPAIVAPSQATRCTKKSEKDTGETEEAAWEQAATSFEALVRFAERQPCFSVQEMGQLQALHTVFRRQQQLRQPRVALRAVIKLEALQEHPGVCVATTHPTLPCSSTAGDN</sequence>
<accession>Q60976</accession>
<name>JERKY_MOUSE</name>
<keyword id="KW-0238">DNA-binding</keyword>
<keyword id="KW-0539">Nucleus</keyword>
<keyword id="KW-1185">Reference proteome</keyword>
<feature type="chain" id="PRO_0000126129" description="Jerky protein">
    <location>
        <begin position="1"/>
        <end position="557"/>
    </location>
</feature>
<feature type="domain" description="HTH psq-type" evidence="2">
    <location>
        <begin position="11"/>
        <end position="62"/>
    </location>
</feature>
<feature type="domain" description="HTH CENPB-type" evidence="3">
    <location>
        <begin position="77"/>
        <end position="149"/>
    </location>
</feature>
<feature type="domain" description="DDE-1" evidence="1">
    <location>
        <begin position="213"/>
        <end position="382"/>
    </location>
</feature>
<feature type="DNA-binding region" description="H-T-H motif" evidence="2">
    <location>
        <begin position="38"/>
        <end position="58"/>
    </location>
</feature>
<feature type="DNA-binding region" description="H-T-H motif" evidence="3">
    <location>
        <begin position="110"/>
        <end position="142"/>
    </location>
</feature>
<gene>
    <name evidence="6" type="primary">Jrk</name>
</gene>
<reference key="1">
    <citation type="journal article" date="1995" name="Nat. Genet.">
        <title>Epileptic seizures caused by inactivation of a novel gene, jerky, related to centromere binding protein-B in transgenic mice.</title>
        <authorList>
            <person name="Toth M."/>
            <person name="Grimsby J."/>
            <person name="Buzsaki G."/>
            <person name="Donovan G.P."/>
        </authorList>
    </citation>
    <scope>NUCLEOTIDE SEQUENCE [MRNA]</scope>
    <source>
        <strain>C57BL / 6J-TGN[LACTAG]40-5TOT</strain>
        <tissue>Brain</tissue>
    </source>
</reference>
<reference key="2">
    <citation type="submission" date="2000-09" db="EMBL/GenBank/DDBJ databases">
        <authorList>
            <person name="Toth M.P."/>
        </authorList>
    </citation>
    <scope>SEQUENCE REVISION TO N-TERMINUS</scope>
</reference>
<proteinExistence type="evidence at transcript level"/>
<comment type="function">
    <text>May bind DNA.</text>
</comment>
<comment type="subcellular location">
    <subcellularLocation>
        <location evidence="2 3">Nucleus</location>
    </subcellularLocation>
</comment>
<comment type="tissue specificity">
    <text>Brain; highest in the temporal and brainstem regions.</text>
</comment>
<comment type="similarity">
    <text evidence="5">Belongs to the tigger transposable element derived protein family.</text>
</comment>
<evidence type="ECO:0000255" key="1"/>
<evidence type="ECO:0000255" key="2">
    <source>
        <dbReference type="PROSITE-ProRule" id="PRU00320"/>
    </source>
</evidence>
<evidence type="ECO:0000255" key="3">
    <source>
        <dbReference type="PROSITE-ProRule" id="PRU00583"/>
    </source>
</evidence>
<evidence type="ECO:0000303" key="4">
    <source>
    </source>
</evidence>
<evidence type="ECO:0000305" key="5"/>
<evidence type="ECO:0000312" key="6">
    <source>
        <dbReference type="MGI" id="MGI:106214"/>
    </source>
</evidence>